<sequence>MKSLNRQTVSRFRKLSVPAAIMMLLSTIISGIGTFLHYREELMPSACANGWIQYDKHCYLDTNIKMSTDNAVYQCRKLRARLPRPDTRHLRVLFSIFYKDYWVSLKKTNDKWLDINNDKDIDISKLTNFKQLNSTTDSEACYIYKSGKLVKTVCKSTQSVLCVKRFYK</sequence>
<protein>
    <recommendedName>
        <fullName>Protein OPG162</fullName>
    </recommendedName>
</protein>
<reference key="1">
    <citation type="journal article" date="2022" name="J. Infect. Dis.">
        <title>Exportation of Monkeypox virus from the African continent.</title>
        <authorList>
            <person name="Mauldin M.R."/>
            <person name="McCollum A.M."/>
            <person name="Nakazawa Y.J."/>
            <person name="Mandra A."/>
            <person name="Whitehouse E.R."/>
            <person name="Davidson W."/>
            <person name="Zhao H."/>
            <person name="Gao J."/>
            <person name="Li Y."/>
            <person name="Doty J."/>
            <person name="Yinka-Ogunleye A."/>
            <person name="Akinpelu A."/>
            <person name="Aruna O."/>
            <person name="Naidoo D."/>
            <person name="Lewandowski K."/>
            <person name="Afrough B."/>
            <person name="Graham V."/>
            <person name="Aarons E."/>
            <person name="Hewson R."/>
            <person name="Vipond R."/>
            <person name="Dunning J."/>
            <person name="Chand M."/>
            <person name="Brown C."/>
            <person name="Cohen-Gihon I."/>
            <person name="Erez N."/>
            <person name="Shifman O."/>
            <person name="Israeli O."/>
            <person name="Sharon M."/>
            <person name="Schwartz E."/>
            <person name="Beth-Din A."/>
            <person name="Zvi A."/>
            <person name="Mak T.M."/>
            <person name="Ng Y.K."/>
            <person name="Cui L."/>
            <person name="Lin R.T.P."/>
            <person name="Olson V.A."/>
            <person name="Brooks T."/>
            <person name="Paran N."/>
            <person name="Ihekweazu C."/>
            <person name="Reynolds M.G."/>
        </authorList>
    </citation>
    <scope>NUCLEOTIDE SEQUENCE [LARGE SCALE GENOMIC DNA]</scope>
    <source>
        <strain>MPXV-M5312_HM12_Rivers</strain>
    </source>
</reference>
<organism>
    <name type="scientific">Monkeypox virus</name>
    <dbReference type="NCBI Taxonomy" id="10244"/>
    <lineage>
        <taxon>Viruses</taxon>
        <taxon>Varidnaviria</taxon>
        <taxon>Bamfordvirae</taxon>
        <taxon>Nucleocytoviricota</taxon>
        <taxon>Pokkesviricetes</taxon>
        <taxon>Chitovirales</taxon>
        <taxon>Poxviridae</taxon>
        <taxon>Chordopoxvirinae</taxon>
        <taxon>Orthopoxvirus</taxon>
    </lineage>
</organism>
<accession>A0A7H0DND3</accession>
<gene>
    <name type="primary">OPG162</name>
    <name type="ORF">MPXVgp146</name>
</gene>
<proteinExistence type="inferred from homology"/>
<feature type="chain" id="PRO_0000457545" description="Protein OPG162">
    <location>
        <begin position="1"/>
        <end position="168"/>
    </location>
</feature>
<feature type="transmembrane region" description="Helical" evidence="2">
    <location>
        <begin position="15"/>
        <end position="37"/>
    </location>
</feature>
<feature type="glycosylation site" description="N-linked (GlcNAc...) asparagine; by host" evidence="2">
    <location>
        <position position="133"/>
    </location>
</feature>
<feature type="disulfide bond" evidence="1">
    <location>
        <begin position="75"/>
        <end position="162"/>
    </location>
</feature>
<feature type="disulfide bond" evidence="1">
    <location>
        <begin position="141"/>
        <end position="154"/>
    </location>
</feature>
<name>PG162_MONPV</name>
<evidence type="ECO:0000250" key="1">
    <source>
        <dbReference type="UniProtKB" id="P24761"/>
    </source>
</evidence>
<evidence type="ECO:0000255" key="2"/>
<evidence type="ECO:0000305" key="3"/>
<organismHost>
    <name type="scientific">Cynomys gunnisoni</name>
    <name type="common">Gunnison's prairie dog</name>
    <name type="synonym">Spermophilus gunnisoni</name>
    <dbReference type="NCBI Taxonomy" id="45479"/>
</organismHost>
<organismHost>
    <name type="scientific">Cynomys leucurus</name>
    <name type="common">White-tailed prairie dog</name>
    <dbReference type="NCBI Taxonomy" id="99825"/>
</organismHost>
<organismHost>
    <name type="scientific">Cynomys ludovicianus</name>
    <name type="common">Black-tailed prairie dog</name>
    <dbReference type="NCBI Taxonomy" id="45480"/>
</organismHost>
<organismHost>
    <name type="scientific">Cynomys mexicanus</name>
    <name type="common">Mexican prairie dog</name>
    <dbReference type="NCBI Taxonomy" id="99826"/>
</organismHost>
<organismHost>
    <name type="scientific">Cynomys parvidens</name>
    <name type="common">Utah prairie dog</name>
    <dbReference type="NCBI Taxonomy" id="99827"/>
</organismHost>
<organismHost>
    <name type="scientific">Gliridae</name>
    <name type="common">dormice</name>
    <dbReference type="NCBI Taxonomy" id="30650"/>
</organismHost>
<organismHost>
    <name type="scientific">Heliosciurus ruwenzorii</name>
    <name type="common">Ruwenzori sun squirrel</name>
    <dbReference type="NCBI Taxonomy" id="226685"/>
</organismHost>
<organismHost>
    <name type="scientific">Homo sapiens</name>
    <name type="common">Human</name>
    <dbReference type="NCBI Taxonomy" id="9606"/>
</organismHost>
<organismHost>
    <name type="scientific">Mus musculus</name>
    <name type="common">Mouse</name>
    <dbReference type="NCBI Taxonomy" id="10090"/>
</organismHost>
<keyword id="KW-1015">Disulfide bond</keyword>
<keyword id="KW-0325">Glycoprotein</keyword>
<keyword id="KW-1040">Host Golgi apparatus</keyword>
<keyword id="KW-0472">Membrane</keyword>
<keyword id="KW-1185">Reference proteome</keyword>
<keyword id="KW-0735">Signal-anchor</keyword>
<keyword id="KW-0812">Transmembrane</keyword>
<keyword id="KW-1133">Transmembrane helix</keyword>
<keyword id="KW-0946">Virion</keyword>
<comment type="function">
    <text evidence="1">Forms a complex with OPG162 and OPG190 to coordinate the incorporation of OPG164 into wrapped enveloped virion (EV) membranes and, subsequently, the production of actin tails. Therefore plays an essential role in efficient cell-to-cell spread of viral particles.</text>
</comment>
<comment type="subunit">
    <text evidence="1">Interacts with protein OPG161. Interacts with protein OPG164. Interacts with protein OPG190.</text>
</comment>
<comment type="subcellular location">
    <subcellularLocation>
        <location evidence="1">Virion membrane</location>
        <topology evidence="1">Single-pass type II membrane protein</topology>
    </subcellularLocation>
    <subcellularLocation>
        <location evidence="1">Host Golgi apparatus</location>
    </subcellularLocation>
    <text evidence="1">Present in the enveloped virion (EV) membrane.</text>
</comment>
<comment type="similarity">
    <text evidence="3">Belongs to the orthopoxvirus OPG162 protein family.</text>
</comment>
<dbReference type="EMBL" id="MT903340">
    <property type="protein sequence ID" value="QNP13016.1"/>
    <property type="molecule type" value="Genomic_DNA"/>
</dbReference>
<dbReference type="RefSeq" id="YP_010377143.1">
    <property type="nucleotide sequence ID" value="NC_063383.1"/>
</dbReference>
<dbReference type="SMR" id="A0A7H0DND3"/>
<dbReference type="GeneID" id="72551556"/>
<dbReference type="Proteomes" id="UP000516359">
    <property type="component" value="Genome"/>
</dbReference>
<dbReference type="GO" id="GO:0044177">
    <property type="term" value="C:host cell Golgi apparatus"/>
    <property type="evidence" value="ECO:0007669"/>
    <property type="project" value="UniProtKB-SubCell"/>
</dbReference>
<dbReference type="GO" id="GO:0016020">
    <property type="term" value="C:membrane"/>
    <property type="evidence" value="ECO:0007669"/>
    <property type="project" value="UniProtKB-KW"/>
</dbReference>
<dbReference type="GO" id="GO:0055036">
    <property type="term" value="C:virion membrane"/>
    <property type="evidence" value="ECO:0007669"/>
    <property type="project" value="UniProtKB-SubCell"/>
</dbReference>
<dbReference type="Gene3D" id="3.10.100.10">
    <property type="entry name" value="Mannose-Binding Protein A, subunit A"/>
    <property type="match status" value="1"/>
</dbReference>
<dbReference type="InterPro" id="IPR001304">
    <property type="entry name" value="C-type_lectin-like"/>
</dbReference>
<dbReference type="InterPro" id="IPR016186">
    <property type="entry name" value="C-type_lectin-like/link_sf"/>
</dbReference>
<dbReference type="InterPro" id="IPR016187">
    <property type="entry name" value="CTDL_fold"/>
</dbReference>
<dbReference type="Pfam" id="PF00059">
    <property type="entry name" value="Lectin_C"/>
    <property type="match status" value="1"/>
</dbReference>
<dbReference type="SUPFAM" id="SSF56436">
    <property type="entry name" value="C-type lectin-like"/>
    <property type="match status" value="1"/>
</dbReference>